<organism>
    <name type="scientific">Escherichia coli O127:H6 (strain E2348/69 / EPEC)</name>
    <dbReference type="NCBI Taxonomy" id="574521"/>
    <lineage>
        <taxon>Bacteria</taxon>
        <taxon>Pseudomonadati</taxon>
        <taxon>Pseudomonadota</taxon>
        <taxon>Gammaproteobacteria</taxon>
        <taxon>Enterobacterales</taxon>
        <taxon>Enterobacteriaceae</taxon>
        <taxon>Escherichia</taxon>
    </lineage>
</organism>
<evidence type="ECO:0000255" key="1">
    <source>
        <dbReference type="HAMAP-Rule" id="MF_01301"/>
    </source>
</evidence>
<feature type="signal peptide" evidence="1">
    <location>
        <begin position="1"/>
        <end position="25"/>
    </location>
</feature>
<feature type="chain" id="PRO_1000165291" description="Maltoporin">
    <location>
        <begin position="26"/>
        <end position="446"/>
    </location>
</feature>
<feature type="site" description="Greasy slide, important in sugar transport" evidence="1">
    <location>
        <position position="31"/>
    </location>
</feature>
<feature type="site" description="Greasy slide, important in sugar transport" evidence="1">
    <location>
        <position position="66"/>
    </location>
</feature>
<feature type="site" description="Greasy slide, important in sugar transport" evidence="1">
    <location>
        <position position="99"/>
    </location>
</feature>
<feature type="site" description="Important in sugar transport" evidence="1">
    <location>
        <position position="143"/>
    </location>
</feature>
<feature type="site" description="Greasy slide, important in sugar transport" evidence="1">
    <location>
        <position position="252"/>
    </location>
</feature>
<feature type="site" description="Greasy slide, important in sugar transport" evidence="1">
    <location>
        <position position="383"/>
    </location>
</feature>
<feature type="site" description="Greasy slide, important in sugar transport" evidence="1">
    <location>
        <position position="445"/>
    </location>
</feature>
<dbReference type="EMBL" id="FM180568">
    <property type="protein sequence ID" value="CAS11899.1"/>
    <property type="molecule type" value="Genomic_DNA"/>
</dbReference>
<dbReference type="RefSeq" id="WP_000973666.1">
    <property type="nucleotide sequence ID" value="NC_011601.1"/>
</dbReference>
<dbReference type="SMR" id="B7UPJ7"/>
<dbReference type="KEGG" id="ecg:E2348C_4351"/>
<dbReference type="HOGENOM" id="CLU_032473_4_1_6"/>
<dbReference type="Proteomes" id="UP000008205">
    <property type="component" value="Chromosome"/>
</dbReference>
<dbReference type="GO" id="GO:0009279">
    <property type="term" value="C:cell outer membrane"/>
    <property type="evidence" value="ECO:0007669"/>
    <property type="project" value="UniProtKB-SubCell"/>
</dbReference>
<dbReference type="GO" id="GO:0046930">
    <property type="term" value="C:pore complex"/>
    <property type="evidence" value="ECO:0007669"/>
    <property type="project" value="UniProtKB-KW"/>
</dbReference>
<dbReference type="GO" id="GO:0042958">
    <property type="term" value="F:maltodextrin transmembrane transporter activity"/>
    <property type="evidence" value="ECO:0007669"/>
    <property type="project" value="InterPro"/>
</dbReference>
<dbReference type="GO" id="GO:0015481">
    <property type="term" value="F:maltose transporting porin activity"/>
    <property type="evidence" value="ECO:0007669"/>
    <property type="project" value="InterPro"/>
</dbReference>
<dbReference type="GO" id="GO:0006811">
    <property type="term" value="P:monoatomic ion transport"/>
    <property type="evidence" value="ECO:0007669"/>
    <property type="project" value="UniProtKB-KW"/>
</dbReference>
<dbReference type="CDD" id="cd01346">
    <property type="entry name" value="Maltoporin-like"/>
    <property type="match status" value="1"/>
</dbReference>
<dbReference type="FunFam" id="2.40.170.10:FF:000001">
    <property type="entry name" value="Maltoporin"/>
    <property type="match status" value="1"/>
</dbReference>
<dbReference type="Gene3D" id="2.40.170.10">
    <property type="entry name" value="Porin, LamB type"/>
    <property type="match status" value="1"/>
</dbReference>
<dbReference type="HAMAP" id="MF_01301">
    <property type="entry name" value="LamB"/>
    <property type="match status" value="1"/>
</dbReference>
<dbReference type="InterPro" id="IPR050286">
    <property type="entry name" value="G_neg_Bact_CarbUptk_Porin"/>
</dbReference>
<dbReference type="InterPro" id="IPR023738">
    <property type="entry name" value="Maltoporin"/>
</dbReference>
<dbReference type="InterPro" id="IPR003192">
    <property type="entry name" value="Porin_LamB"/>
</dbReference>
<dbReference type="InterPro" id="IPR036998">
    <property type="entry name" value="Porin_LamB_sf"/>
</dbReference>
<dbReference type="NCBIfam" id="NF006860">
    <property type="entry name" value="PRK09360.1"/>
    <property type="match status" value="1"/>
</dbReference>
<dbReference type="PANTHER" id="PTHR38762">
    <property type="entry name" value="CRYPTIC OUTER MEMBRANE PORIN BGLH-RELATED"/>
    <property type="match status" value="1"/>
</dbReference>
<dbReference type="PANTHER" id="PTHR38762:SF1">
    <property type="entry name" value="CRYPTIC OUTER MEMBRANE PORIN BGLH-RELATED"/>
    <property type="match status" value="1"/>
</dbReference>
<dbReference type="Pfam" id="PF02264">
    <property type="entry name" value="LamB"/>
    <property type="match status" value="1"/>
</dbReference>
<dbReference type="SUPFAM" id="SSF56935">
    <property type="entry name" value="Porins"/>
    <property type="match status" value="1"/>
</dbReference>
<accession>B7UPJ7</accession>
<name>LAMB_ECO27</name>
<proteinExistence type="inferred from homology"/>
<protein>
    <recommendedName>
        <fullName evidence="1">Maltoporin</fullName>
    </recommendedName>
    <alternativeName>
        <fullName evidence="1">Maltose-inducible porin</fullName>
    </alternativeName>
</protein>
<comment type="function">
    <text evidence="1">Involved in the transport of maltose and maltodextrins.</text>
</comment>
<comment type="catalytic activity">
    <reaction evidence="1">
        <text>beta-maltose(in) = beta-maltose(out)</text>
        <dbReference type="Rhea" id="RHEA:29731"/>
        <dbReference type="ChEBI" id="CHEBI:18147"/>
    </reaction>
</comment>
<comment type="subunit">
    <text evidence="1">Homotrimer formed of three 18-stranded antiparallel beta-barrels, containing three independent channels.</text>
</comment>
<comment type="subcellular location">
    <subcellularLocation>
        <location evidence="1">Cell outer membrane</location>
        <topology evidence="1">Multi-pass membrane protein</topology>
    </subcellularLocation>
</comment>
<comment type="induction">
    <text evidence="1">By maltose.</text>
</comment>
<comment type="similarity">
    <text evidence="1">Belongs to the porin LamB (TC 1.B.3) family.</text>
</comment>
<reference key="1">
    <citation type="journal article" date="2009" name="J. Bacteriol.">
        <title>Complete genome sequence and comparative genome analysis of enteropathogenic Escherichia coli O127:H6 strain E2348/69.</title>
        <authorList>
            <person name="Iguchi A."/>
            <person name="Thomson N.R."/>
            <person name="Ogura Y."/>
            <person name="Saunders D."/>
            <person name="Ooka T."/>
            <person name="Henderson I.R."/>
            <person name="Harris D."/>
            <person name="Asadulghani M."/>
            <person name="Kurokawa K."/>
            <person name="Dean P."/>
            <person name="Kenny B."/>
            <person name="Quail M.A."/>
            <person name="Thurston S."/>
            <person name="Dougan G."/>
            <person name="Hayashi T."/>
            <person name="Parkhill J."/>
            <person name="Frankel G."/>
        </authorList>
    </citation>
    <scope>NUCLEOTIDE SEQUENCE [LARGE SCALE GENOMIC DNA]</scope>
    <source>
        <strain>E2348/69 / EPEC</strain>
    </source>
</reference>
<sequence length="446" mass="49941">MMITLRKLPLAVAVAAGVMSAQAMAVDFHGYARSGIGWTGSGGEQQCFQTTGAQSKYRLGNECETYAELKLGQEVWKEGDKSFYFDTNVAYSVAQQNDWEATDPAFREANVQGKNLIEWLPGSTIWAGKRFYQRHDVHMIDFYYWDISGPGAGLENIDVGFGKLSLAATRSSEAGGSSSFASNNIYDYTNETANDVFDVRLAQMEINPGGTLELGVDYGRANLRDNYRLVDGASKDGWLFTAEHTQSVLKGFNKFVVQYATDSMTSQGKGLSQGSGVAFDNEKFAYNINNNGHMLRILDHGAISMGDNWDMMYVGMYQDINWDNDNGTKWWTVGIRPMYKWTPIMSTVMEIGYDNVESQRTGDKNNQYKITLAQQWQAGDSIWSRPAIRVFATYAKWDEKWGYDYTGSSSTNPYYGKAVSADFNGGSFGRGDSDEWTFGAQMEIWW</sequence>
<keyword id="KW-0998">Cell outer membrane</keyword>
<keyword id="KW-0406">Ion transport</keyword>
<keyword id="KW-0472">Membrane</keyword>
<keyword id="KW-0626">Porin</keyword>
<keyword id="KW-1185">Reference proteome</keyword>
<keyword id="KW-0732">Signal</keyword>
<keyword id="KW-0762">Sugar transport</keyword>
<keyword id="KW-0812">Transmembrane</keyword>
<keyword id="KW-1134">Transmembrane beta strand</keyword>
<keyword id="KW-0813">Transport</keyword>
<gene>
    <name evidence="1" type="primary">lamB</name>
    <name type="ordered locus">E2348C_4351</name>
</gene>